<keyword id="KW-0067">ATP-binding</keyword>
<keyword id="KW-0963">Cytoplasm</keyword>
<keyword id="KW-0436">Ligase</keyword>
<keyword id="KW-0547">Nucleotide-binding</keyword>
<keyword id="KW-0566">Pantothenate biosynthesis</keyword>
<sequence length="283" mass="30836">MNTVKTVRELRAAVARARSEGKRIGFVPTMGNLHAGHAALVKKAGERADFVVVSIFVNPLQFGPSEDLDTYPRTLAADQERLLEAGCHLLFTPTVEEMYPDGMDGQTRIHVPGVSEGLCGASRPGHFEGVATVVSKLLNMVQPDLALFGEKDFQQLAVIRKLVRDLNLPVQIFGEPTVRAADGLALSSRNGYLDEQQRAAAPAIYRTLRQLGERIRAGAEDFPALLADARQALEQAGLRPDYLEIREPISLRPGVPGDRQLVILAAAYLGSTRLIDNLSVHLD</sequence>
<evidence type="ECO:0000255" key="1">
    <source>
        <dbReference type="HAMAP-Rule" id="MF_00158"/>
    </source>
</evidence>
<dbReference type="EC" id="6.3.2.1" evidence="1"/>
<dbReference type="EMBL" id="CP000438">
    <property type="protein sequence ID" value="ABJ14113.1"/>
    <property type="molecule type" value="Genomic_DNA"/>
</dbReference>
<dbReference type="RefSeq" id="WP_003109313.1">
    <property type="nucleotide sequence ID" value="NZ_CP034244.1"/>
</dbReference>
<dbReference type="SMR" id="Q02FU2"/>
<dbReference type="KEGG" id="pau:PA14_62590"/>
<dbReference type="PseudoCAP" id="PA14_62590"/>
<dbReference type="HOGENOM" id="CLU_047148_0_0_6"/>
<dbReference type="BioCyc" id="PAER208963:G1G74-5292-MONOMER"/>
<dbReference type="UniPathway" id="UPA00028">
    <property type="reaction ID" value="UER00005"/>
</dbReference>
<dbReference type="Proteomes" id="UP000000653">
    <property type="component" value="Chromosome"/>
</dbReference>
<dbReference type="GO" id="GO:0005829">
    <property type="term" value="C:cytosol"/>
    <property type="evidence" value="ECO:0007669"/>
    <property type="project" value="TreeGrafter"/>
</dbReference>
<dbReference type="GO" id="GO:0005524">
    <property type="term" value="F:ATP binding"/>
    <property type="evidence" value="ECO:0007669"/>
    <property type="project" value="UniProtKB-KW"/>
</dbReference>
<dbReference type="GO" id="GO:0004592">
    <property type="term" value="F:pantoate-beta-alanine ligase activity"/>
    <property type="evidence" value="ECO:0007669"/>
    <property type="project" value="UniProtKB-UniRule"/>
</dbReference>
<dbReference type="GO" id="GO:0015940">
    <property type="term" value="P:pantothenate biosynthetic process"/>
    <property type="evidence" value="ECO:0007669"/>
    <property type="project" value="UniProtKB-UniRule"/>
</dbReference>
<dbReference type="CDD" id="cd00560">
    <property type="entry name" value="PanC"/>
    <property type="match status" value="1"/>
</dbReference>
<dbReference type="FunFam" id="3.30.1300.10:FF:000001">
    <property type="entry name" value="Pantothenate synthetase"/>
    <property type="match status" value="1"/>
</dbReference>
<dbReference type="FunFam" id="3.40.50.620:FF:000013">
    <property type="entry name" value="Pantothenate synthetase"/>
    <property type="match status" value="1"/>
</dbReference>
<dbReference type="Gene3D" id="3.40.50.620">
    <property type="entry name" value="HUPs"/>
    <property type="match status" value="1"/>
</dbReference>
<dbReference type="Gene3D" id="3.30.1300.10">
    <property type="entry name" value="Pantoate-beta-alanine ligase, C-terminal domain"/>
    <property type="match status" value="1"/>
</dbReference>
<dbReference type="HAMAP" id="MF_00158">
    <property type="entry name" value="PanC"/>
    <property type="match status" value="1"/>
</dbReference>
<dbReference type="InterPro" id="IPR003721">
    <property type="entry name" value="Pantoate_ligase"/>
</dbReference>
<dbReference type="InterPro" id="IPR042176">
    <property type="entry name" value="Pantoate_ligase_C"/>
</dbReference>
<dbReference type="InterPro" id="IPR014729">
    <property type="entry name" value="Rossmann-like_a/b/a_fold"/>
</dbReference>
<dbReference type="NCBIfam" id="TIGR00018">
    <property type="entry name" value="panC"/>
    <property type="match status" value="1"/>
</dbReference>
<dbReference type="PANTHER" id="PTHR21299">
    <property type="entry name" value="CYTIDYLATE KINASE/PANTOATE-BETA-ALANINE LIGASE"/>
    <property type="match status" value="1"/>
</dbReference>
<dbReference type="PANTHER" id="PTHR21299:SF1">
    <property type="entry name" value="PANTOATE--BETA-ALANINE LIGASE"/>
    <property type="match status" value="1"/>
</dbReference>
<dbReference type="Pfam" id="PF02569">
    <property type="entry name" value="Pantoate_ligase"/>
    <property type="match status" value="1"/>
</dbReference>
<dbReference type="SUPFAM" id="SSF52374">
    <property type="entry name" value="Nucleotidylyl transferase"/>
    <property type="match status" value="1"/>
</dbReference>
<protein>
    <recommendedName>
        <fullName evidence="1">Pantothenate synthetase</fullName>
        <shortName evidence="1">PS</shortName>
        <ecNumber evidence="1">6.3.2.1</ecNumber>
    </recommendedName>
    <alternativeName>
        <fullName evidence="1">Pantoate--beta-alanine ligase</fullName>
    </alternativeName>
    <alternativeName>
        <fullName evidence="1">Pantoate-activating enzyme</fullName>
    </alternativeName>
</protein>
<proteinExistence type="inferred from homology"/>
<feature type="chain" id="PRO_0000305514" description="Pantothenate synthetase">
    <location>
        <begin position="1"/>
        <end position="283"/>
    </location>
</feature>
<feature type="active site" description="Proton donor" evidence="1">
    <location>
        <position position="37"/>
    </location>
</feature>
<feature type="binding site" evidence="1">
    <location>
        <begin position="30"/>
        <end position="37"/>
    </location>
    <ligand>
        <name>ATP</name>
        <dbReference type="ChEBI" id="CHEBI:30616"/>
    </ligand>
</feature>
<feature type="binding site" evidence="1">
    <location>
        <position position="61"/>
    </location>
    <ligand>
        <name>(R)-pantoate</name>
        <dbReference type="ChEBI" id="CHEBI:15980"/>
    </ligand>
</feature>
<feature type="binding site" evidence="1">
    <location>
        <position position="61"/>
    </location>
    <ligand>
        <name>beta-alanine</name>
        <dbReference type="ChEBI" id="CHEBI:57966"/>
    </ligand>
</feature>
<feature type="binding site" evidence="1">
    <location>
        <begin position="149"/>
        <end position="152"/>
    </location>
    <ligand>
        <name>ATP</name>
        <dbReference type="ChEBI" id="CHEBI:30616"/>
    </ligand>
</feature>
<feature type="binding site" evidence="1">
    <location>
        <position position="155"/>
    </location>
    <ligand>
        <name>(R)-pantoate</name>
        <dbReference type="ChEBI" id="CHEBI:15980"/>
    </ligand>
</feature>
<feature type="binding site" evidence="1">
    <location>
        <position position="178"/>
    </location>
    <ligand>
        <name>ATP</name>
        <dbReference type="ChEBI" id="CHEBI:30616"/>
    </ligand>
</feature>
<feature type="binding site" evidence="1">
    <location>
        <begin position="186"/>
        <end position="189"/>
    </location>
    <ligand>
        <name>ATP</name>
        <dbReference type="ChEBI" id="CHEBI:30616"/>
    </ligand>
</feature>
<gene>
    <name evidence="1" type="primary">panC</name>
    <name type="ordered locus">PA14_62590</name>
</gene>
<accession>Q02FU2</accession>
<organism>
    <name type="scientific">Pseudomonas aeruginosa (strain UCBPP-PA14)</name>
    <dbReference type="NCBI Taxonomy" id="208963"/>
    <lineage>
        <taxon>Bacteria</taxon>
        <taxon>Pseudomonadati</taxon>
        <taxon>Pseudomonadota</taxon>
        <taxon>Gammaproteobacteria</taxon>
        <taxon>Pseudomonadales</taxon>
        <taxon>Pseudomonadaceae</taxon>
        <taxon>Pseudomonas</taxon>
    </lineage>
</organism>
<comment type="function">
    <text evidence="1">Catalyzes the condensation of pantoate with beta-alanine in an ATP-dependent reaction via a pantoyl-adenylate intermediate.</text>
</comment>
<comment type="catalytic activity">
    <reaction evidence="1">
        <text>(R)-pantoate + beta-alanine + ATP = (R)-pantothenate + AMP + diphosphate + H(+)</text>
        <dbReference type="Rhea" id="RHEA:10912"/>
        <dbReference type="ChEBI" id="CHEBI:15378"/>
        <dbReference type="ChEBI" id="CHEBI:15980"/>
        <dbReference type="ChEBI" id="CHEBI:29032"/>
        <dbReference type="ChEBI" id="CHEBI:30616"/>
        <dbReference type="ChEBI" id="CHEBI:33019"/>
        <dbReference type="ChEBI" id="CHEBI:57966"/>
        <dbReference type="ChEBI" id="CHEBI:456215"/>
        <dbReference type="EC" id="6.3.2.1"/>
    </reaction>
</comment>
<comment type="pathway">
    <text evidence="1">Cofactor biosynthesis; (R)-pantothenate biosynthesis; (R)-pantothenate from (R)-pantoate and beta-alanine: step 1/1.</text>
</comment>
<comment type="subunit">
    <text evidence="1">Homodimer.</text>
</comment>
<comment type="subcellular location">
    <subcellularLocation>
        <location evidence="1">Cytoplasm</location>
    </subcellularLocation>
</comment>
<comment type="miscellaneous">
    <text evidence="1">The reaction proceeds by a bi uni uni bi ping pong mechanism.</text>
</comment>
<comment type="similarity">
    <text evidence="1">Belongs to the pantothenate synthetase family.</text>
</comment>
<reference key="1">
    <citation type="journal article" date="2006" name="Genome Biol.">
        <title>Genomic analysis reveals that Pseudomonas aeruginosa virulence is combinatorial.</title>
        <authorList>
            <person name="Lee D.G."/>
            <person name="Urbach J.M."/>
            <person name="Wu G."/>
            <person name="Liberati N.T."/>
            <person name="Feinbaum R.L."/>
            <person name="Miyata S."/>
            <person name="Diggins L.T."/>
            <person name="He J."/>
            <person name="Saucier M."/>
            <person name="Deziel E."/>
            <person name="Friedman L."/>
            <person name="Li L."/>
            <person name="Grills G."/>
            <person name="Montgomery K."/>
            <person name="Kucherlapati R."/>
            <person name="Rahme L.G."/>
            <person name="Ausubel F.M."/>
        </authorList>
    </citation>
    <scope>NUCLEOTIDE SEQUENCE [LARGE SCALE GENOMIC DNA]</scope>
    <source>
        <strain>UCBPP-PA14</strain>
    </source>
</reference>
<name>PANC_PSEAB</name>